<feature type="chain" id="PRO_0000056280" description="E3 ubiquitin-protein ligase TRIM52">
    <location>
        <begin position="1"/>
        <end position="297"/>
    </location>
</feature>
<feature type="zinc finger region" description="RING-type; degenerate" evidence="2">
    <location>
        <begin position="20"/>
        <end position="62"/>
    </location>
</feature>
<feature type="zinc finger region" description="B box-type" evidence="1">
    <location>
        <begin position="222"/>
        <end position="263"/>
    </location>
</feature>
<feature type="region of interest" description="Important for rapid proteolytic degradation by the proteasome" evidence="6">
    <location>
        <begin position="72"/>
        <end position="167"/>
    </location>
</feature>
<feature type="binding site" evidence="1">
    <location>
        <position position="227"/>
    </location>
    <ligand>
        <name>Zn(2+)</name>
        <dbReference type="ChEBI" id="CHEBI:29105"/>
    </ligand>
</feature>
<feature type="binding site" evidence="1">
    <location>
        <position position="230"/>
    </location>
    <ligand>
        <name>Zn(2+)</name>
        <dbReference type="ChEBI" id="CHEBI:29105"/>
    </ligand>
</feature>
<feature type="binding site" evidence="1">
    <location>
        <position position="249"/>
    </location>
    <ligand>
        <name>Zn(2+)</name>
        <dbReference type="ChEBI" id="CHEBI:29105"/>
    </ligand>
</feature>
<feature type="binding site" evidence="1">
    <location>
        <position position="255"/>
    </location>
    <ligand>
        <name>Zn(2+)</name>
        <dbReference type="ChEBI" id="CHEBI:29105"/>
    </ligand>
</feature>
<feature type="splice variant" id="VSP_060452" description="In isoform 2.">
    <original>EIKLETTLVGILQIE</original>
    <variation>VREMRECGGMKGVER</variation>
    <location>
        <begin position="272"/>
        <end position="286"/>
    </location>
</feature>
<feature type="splice variant" id="VSP_060453" description="In isoform 2.">
    <location>
        <begin position="287"/>
        <end position="297"/>
    </location>
</feature>
<feature type="sequence conflict" description="In Ref. 3; BAD92480." evidence="7" ref="3">
    <location>
        <position position="130"/>
    </location>
</feature>
<accession>Q96A61</accession>
<accession>L0CQ38</accession>
<accession>Q59G66</accession>
<name>TRI52_HUMAN</name>
<comment type="function">
    <text evidence="4 5">E3 ubiquitin-protein ligase (PubMed:27667714). Positively regulates the NF-kappa-B signaling pathway (PubMed:27667714, PubMed:28073078).</text>
</comment>
<comment type="function">
    <text evidence="4">(Microbial infection) Exhibits antiviral activity against Japanese encephalitis virus (JEV). Ubiquitinates the viral non-structural protein 2 (NS2A) and targets it for proteasome-mediated degradation.</text>
</comment>
<comment type="catalytic activity">
    <reaction evidence="4">
        <text>S-ubiquitinyl-[E2 ubiquitin-conjugating enzyme]-L-cysteine + [acceptor protein]-L-lysine = [E2 ubiquitin-conjugating enzyme]-L-cysteine + N(6)-ubiquitinyl-[acceptor protein]-L-lysine.</text>
        <dbReference type="EC" id="2.3.2.27"/>
    </reaction>
</comment>
<comment type="pathway">
    <text>Protein modification; protein ubiquitination.</text>
</comment>
<comment type="subunit">
    <text evidence="4">(Microbial infection) Interacts with Japanese encephalitis virus non-structural protein 2 (NS2A); mediates the ubiquitination of NS2A, targeting it for proteasome-mediated degradation.</text>
</comment>
<comment type="subcellular location">
    <subcellularLocation>
        <location evidence="5">Cytoplasm</location>
    </subcellularLocation>
    <subcellularLocation>
        <location evidence="4">Cytoplasm</location>
        <location evidence="4">Cytosol</location>
    </subcellularLocation>
    <subcellularLocation>
        <location evidence="4 5">Nucleus</location>
    </subcellularLocation>
</comment>
<comment type="alternative products">
    <event type="alternative splicing"/>
    <isoform>
        <id>Q96A61-1</id>
        <name>1</name>
        <sequence type="displayed"/>
    </isoform>
    <isoform>
        <id>Q96A61-2</id>
        <name>2</name>
        <sequence type="described" ref="VSP_060452 VSP_060453"/>
    </isoform>
</comment>
<comment type="induction">
    <text evidence="5 6">Up-regulated by Golgi stress-inducing agents such nigericin, trichostatin, tetoposide, campothecin and brefeldin A (PubMed:31133683). Up-regulated by IL1B/interleukin-1 beta and TNFA/TNF-alpha (PubMed:28073078).</text>
</comment>
<comment type="domain">
    <text evidence="4 5">The RING-type zinc finger domain is essential for its E3 ubiquitin-protein ligase activity, ability to positively regulate the NF-kappa-B signaling pathway and its antiviral activity.</text>
</comment>
<comment type="PTM">
    <text evidence="3 4 6">Autoubiquitinated (PubMed:27667714). Polyubiquitinated (PubMed:20596523, PubMed:27667714). Undergoes extremely rapid proteolytic degradation by the proteasome (PubMed:31133683).</text>
</comment>
<comment type="miscellaneous">
    <text evidence="8">Arose via a partial duplication of the TRIM41 gene, followed by independent loss or pseudogenization of TRIM52 in multiple mammalian and primate lineages.</text>
</comment>
<comment type="similarity">
    <text evidence="7">Belongs to the TRIM/RBCC family.</text>
</comment>
<comment type="sequence caution" evidence="7">
    <conflict type="erroneous initiation">
        <sequence resource="EMBL-CDS" id="BAD92480"/>
    </conflict>
    <text>Truncated N-terminus.</text>
</comment>
<keyword id="KW-0025">Alternative splicing</keyword>
<keyword id="KW-0051">Antiviral defense</keyword>
<keyword id="KW-0963">Cytoplasm</keyword>
<keyword id="KW-0479">Metal-binding</keyword>
<keyword id="KW-0539">Nucleus</keyword>
<keyword id="KW-1267">Proteomics identification</keyword>
<keyword id="KW-1185">Reference proteome</keyword>
<keyword id="KW-0808">Transferase</keyword>
<keyword id="KW-0832">Ubl conjugation</keyword>
<keyword id="KW-0833">Ubl conjugation pathway</keyword>
<keyword id="KW-0862">Zinc</keyword>
<keyword id="KW-0863">Zinc-finger</keyword>
<proteinExistence type="evidence at protein level"/>
<reference key="1">
    <citation type="journal article" date="2013" name="Genome Biol. Evol.">
        <title>An evolutionary screen highlights canonical and noncanonical candidate antiviral genes within the primate TRIM gene family.</title>
        <authorList>
            <person name="Malfavon-Borja R."/>
            <person name="Sawyer S.L."/>
            <person name="Wu L.I."/>
            <person name="Emerman M."/>
            <person name="Malik H.S."/>
        </authorList>
    </citation>
    <scope>NUCLEOTIDE SEQUENCE [MRNA] (ISOFORM 1)</scope>
</reference>
<reference key="2">
    <citation type="journal article" date="2004" name="Nat. Genet.">
        <title>Complete sequencing and characterization of 21,243 full-length human cDNAs.</title>
        <authorList>
            <person name="Ota T."/>
            <person name="Suzuki Y."/>
            <person name="Nishikawa T."/>
            <person name="Otsuki T."/>
            <person name="Sugiyama T."/>
            <person name="Irie R."/>
            <person name="Wakamatsu A."/>
            <person name="Hayashi K."/>
            <person name="Sato H."/>
            <person name="Nagai K."/>
            <person name="Kimura K."/>
            <person name="Makita H."/>
            <person name="Sekine M."/>
            <person name="Obayashi M."/>
            <person name="Nishi T."/>
            <person name="Shibahara T."/>
            <person name="Tanaka T."/>
            <person name="Ishii S."/>
            <person name="Yamamoto J."/>
            <person name="Saito K."/>
            <person name="Kawai Y."/>
            <person name="Isono Y."/>
            <person name="Nakamura Y."/>
            <person name="Nagahari K."/>
            <person name="Murakami K."/>
            <person name="Yasuda T."/>
            <person name="Iwayanagi T."/>
            <person name="Wagatsuma M."/>
            <person name="Shiratori A."/>
            <person name="Sudo H."/>
            <person name="Hosoiri T."/>
            <person name="Kaku Y."/>
            <person name="Kodaira H."/>
            <person name="Kondo H."/>
            <person name="Sugawara M."/>
            <person name="Takahashi M."/>
            <person name="Kanda K."/>
            <person name="Yokoi T."/>
            <person name="Furuya T."/>
            <person name="Kikkawa E."/>
            <person name="Omura Y."/>
            <person name="Abe K."/>
            <person name="Kamihara K."/>
            <person name="Katsuta N."/>
            <person name="Sato K."/>
            <person name="Tanikawa M."/>
            <person name="Yamazaki M."/>
            <person name="Ninomiya K."/>
            <person name="Ishibashi T."/>
            <person name="Yamashita H."/>
            <person name="Murakawa K."/>
            <person name="Fujimori K."/>
            <person name="Tanai H."/>
            <person name="Kimata M."/>
            <person name="Watanabe M."/>
            <person name="Hiraoka S."/>
            <person name="Chiba Y."/>
            <person name="Ishida S."/>
            <person name="Ono Y."/>
            <person name="Takiguchi S."/>
            <person name="Watanabe S."/>
            <person name="Yosida M."/>
            <person name="Hotuta T."/>
            <person name="Kusano J."/>
            <person name="Kanehori K."/>
            <person name="Takahashi-Fujii A."/>
            <person name="Hara H."/>
            <person name="Tanase T.-O."/>
            <person name="Nomura Y."/>
            <person name="Togiya S."/>
            <person name="Komai F."/>
            <person name="Hara R."/>
            <person name="Takeuchi K."/>
            <person name="Arita M."/>
            <person name="Imose N."/>
            <person name="Musashino K."/>
            <person name="Yuuki H."/>
            <person name="Oshima A."/>
            <person name="Sasaki N."/>
            <person name="Aotsuka S."/>
            <person name="Yoshikawa Y."/>
            <person name="Matsunawa H."/>
            <person name="Ichihara T."/>
            <person name="Shiohata N."/>
            <person name="Sano S."/>
            <person name="Moriya S."/>
            <person name="Momiyama H."/>
            <person name="Satoh N."/>
            <person name="Takami S."/>
            <person name="Terashima Y."/>
            <person name="Suzuki O."/>
            <person name="Nakagawa S."/>
            <person name="Senoh A."/>
            <person name="Mizoguchi H."/>
            <person name="Goto Y."/>
            <person name="Shimizu F."/>
            <person name="Wakebe H."/>
            <person name="Hishigaki H."/>
            <person name="Watanabe T."/>
            <person name="Sugiyama A."/>
            <person name="Takemoto M."/>
            <person name="Kawakami B."/>
            <person name="Yamazaki M."/>
            <person name="Watanabe K."/>
            <person name="Kumagai A."/>
            <person name="Itakura S."/>
            <person name="Fukuzumi Y."/>
            <person name="Fujimori Y."/>
            <person name="Komiyama M."/>
            <person name="Tashiro H."/>
            <person name="Tanigami A."/>
            <person name="Fujiwara T."/>
            <person name="Ono T."/>
            <person name="Yamada K."/>
            <person name="Fujii Y."/>
            <person name="Ozaki K."/>
            <person name="Hirao M."/>
            <person name="Ohmori Y."/>
            <person name="Kawabata A."/>
            <person name="Hikiji T."/>
            <person name="Kobatake N."/>
            <person name="Inagaki H."/>
            <person name="Ikema Y."/>
            <person name="Okamoto S."/>
            <person name="Okitani R."/>
            <person name="Kawakami T."/>
            <person name="Noguchi S."/>
            <person name="Itoh T."/>
            <person name="Shigeta K."/>
            <person name="Senba T."/>
            <person name="Matsumura K."/>
            <person name="Nakajima Y."/>
            <person name="Mizuno T."/>
            <person name="Morinaga M."/>
            <person name="Sasaki M."/>
            <person name="Togashi T."/>
            <person name="Oyama M."/>
            <person name="Hata H."/>
            <person name="Watanabe M."/>
            <person name="Komatsu T."/>
            <person name="Mizushima-Sugano J."/>
            <person name="Satoh T."/>
            <person name="Shirai Y."/>
            <person name="Takahashi Y."/>
            <person name="Nakagawa K."/>
            <person name="Okumura K."/>
            <person name="Nagase T."/>
            <person name="Nomura N."/>
            <person name="Kikuchi H."/>
            <person name="Masuho Y."/>
            <person name="Yamashita R."/>
            <person name="Nakai K."/>
            <person name="Yada T."/>
            <person name="Nakamura Y."/>
            <person name="Ohara O."/>
            <person name="Isogai T."/>
            <person name="Sugano S."/>
        </authorList>
    </citation>
    <scope>NUCLEOTIDE SEQUENCE [LARGE SCALE MRNA] (ISOFORM 1)</scope>
    <source>
        <tissue>Cerebellum</tissue>
    </source>
</reference>
<reference key="3">
    <citation type="submission" date="2005-03" db="EMBL/GenBank/DDBJ databases">
        <title>Homo sapiens protein coding cDNA.</title>
        <authorList>
            <person name="Totoki Y."/>
            <person name="Toyoda A."/>
            <person name="Takeda T."/>
            <person name="Sakaki Y."/>
            <person name="Tanaka A."/>
            <person name="Yokoyama S."/>
            <person name="Ohara O."/>
            <person name="Nagase T."/>
            <person name="Kikuno R.F."/>
        </authorList>
    </citation>
    <scope>NUCLEOTIDE SEQUENCE [LARGE SCALE MRNA] (ISOFORM 2)</scope>
    <source>
        <tissue>Brain</tissue>
    </source>
</reference>
<reference key="4">
    <citation type="journal article" date="2004" name="Nature">
        <title>The DNA sequence and comparative analysis of human chromosome 5.</title>
        <authorList>
            <person name="Schmutz J."/>
            <person name="Martin J."/>
            <person name="Terry A."/>
            <person name="Couronne O."/>
            <person name="Grimwood J."/>
            <person name="Lowry S."/>
            <person name="Gordon L.A."/>
            <person name="Scott D."/>
            <person name="Xie G."/>
            <person name="Huang W."/>
            <person name="Hellsten U."/>
            <person name="Tran-Gyamfi M."/>
            <person name="She X."/>
            <person name="Prabhakar S."/>
            <person name="Aerts A."/>
            <person name="Altherr M."/>
            <person name="Bajorek E."/>
            <person name="Black S."/>
            <person name="Branscomb E."/>
            <person name="Caoile C."/>
            <person name="Challacombe J.F."/>
            <person name="Chan Y.M."/>
            <person name="Denys M."/>
            <person name="Detter J.C."/>
            <person name="Escobar J."/>
            <person name="Flowers D."/>
            <person name="Fotopulos D."/>
            <person name="Glavina T."/>
            <person name="Gomez M."/>
            <person name="Gonzales E."/>
            <person name="Goodstein D."/>
            <person name="Grigoriev I."/>
            <person name="Groza M."/>
            <person name="Hammon N."/>
            <person name="Hawkins T."/>
            <person name="Haydu L."/>
            <person name="Israni S."/>
            <person name="Jett J."/>
            <person name="Kadner K."/>
            <person name="Kimball H."/>
            <person name="Kobayashi A."/>
            <person name="Lopez F."/>
            <person name="Lou Y."/>
            <person name="Martinez D."/>
            <person name="Medina C."/>
            <person name="Morgan J."/>
            <person name="Nandkeshwar R."/>
            <person name="Noonan J.P."/>
            <person name="Pitluck S."/>
            <person name="Pollard M."/>
            <person name="Predki P."/>
            <person name="Priest J."/>
            <person name="Ramirez L."/>
            <person name="Retterer J."/>
            <person name="Rodriguez A."/>
            <person name="Rogers S."/>
            <person name="Salamov A."/>
            <person name="Salazar A."/>
            <person name="Thayer N."/>
            <person name="Tice H."/>
            <person name="Tsai M."/>
            <person name="Ustaszewska A."/>
            <person name="Vo N."/>
            <person name="Wheeler J."/>
            <person name="Wu K."/>
            <person name="Yang J."/>
            <person name="Dickson M."/>
            <person name="Cheng J.-F."/>
            <person name="Eichler E.E."/>
            <person name="Olsen A."/>
            <person name="Pennacchio L.A."/>
            <person name="Rokhsar D.S."/>
            <person name="Richardson P."/>
            <person name="Lucas S.M."/>
            <person name="Myers R.M."/>
            <person name="Rubin E.M."/>
        </authorList>
    </citation>
    <scope>NUCLEOTIDE SEQUENCE [LARGE SCALE GENOMIC DNA]</scope>
</reference>
<reference key="5">
    <citation type="submission" date="2005-09" db="EMBL/GenBank/DDBJ databases">
        <authorList>
            <person name="Mural R.J."/>
            <person name="Istrail S."/>
            <person name="Sutton G.G."/>
            <person name="Florea L."/>
            <person name="Halpern A.L."/>
            <person name="Mobarry C.M."/>
            <person name="Lippert R."/>
            <person name="Walenz B."/>
            <person name="Shatkay H."/>
            <person name="Dew I."/>
            <person name="Miller J.R."/>
            <person name="Flanigan M.J."/>
            <person name="Edwards N.J."/>
            <person name="Bolanos R."/>
            <person name="Fasulo D."/>
            <person name="Halldorsson B.V."/>
            <person name="Hannenhalli S."/>
            <person name="Turner R."/>
            <person name="Yooseph S."/>
            <person name="Lu F."/>
            <person name="Nusskern D.R."/>
            <person name="Shue B.C."/>
            <person name="Zheng X.H."/>
            <person name="Zhong F."/>
            <person name="Delcher A.L."/>
            <person name="Huson D.H."/>
            <person name="Kravitz S.A."/>
            <person name="Mouchard L."/>
            <person name="Reinert K."/>
            <person name="Remington K.A."/>
            <person name="Clark A.G."/>
            <person name="Waterman M.S."/>
            <person name="Eichler E.E."/>
            <person name="Adams M.D."/>
            <person name="Hunkapiller M.W."/>
            <person name="Myers E.W."/>
            <person name="Venter J.C."/>
        </authorList>
    </citation>
    <scope>NUCLEOTIDE SEQUENCE [LARGE SCALE GENOMIC DNA]</scope>
</reference>
<reference key="6">
    <citation type="journal article" date="2004" name="Genome Res.">
        <title>The status, quality, and expansion of the NIH full-length cDNA project: the Mammalian Gene Collection (MGC).</title>
        <authorList>
            <consortium name="The MGC Project Team"/>
        </authorList>
    </citation>
    <scope>NUCLEOTIDE SEQUENCE [LARGE SCALE MRNA] (ISOFORM 1)</scope>
    <source>
        <tissue>Placenta</tissue>
    </source>
</reference>
<reference key="7">
    <citation type="journal article" date="2010" name="PLoS ONE">
        <title>Development and validation of a method for profiling post-translational modification activities using protein microarrays.</title>
        <authorList>
            <person name="Del Rincon S.V."/>
            <person name="Rogers J."/>
            <person name="Widschwendter M."/>
            <person name="Sun D."/>
            <person name="Sieburg H.B."/>
            <person name="Spruck C."/>
        </authorList>
    </citation>
    <scope>UBIQUITINATION</scope>
</reference>
<reference key="8">
    <citation type="journal article" date="2016" name="Sci. Rep.">
        <title>TRIM52 inhibits Japanese Encephalitis Virus replication by degrading the viral NS2A.</title>
        <authorList>
            <person name="Fan W."/>
            <person name="Wu M."/>
            <person name="Qian S."/>
            <person name="Zhou Y."/>
            <person name="Chen H."/>
            <person name="Li X."/>
            <person name="Qian P."/>
        </authorList>
    </citation>
    <scope>FUNCTION AS E3 UBIQUITIN-PROTEIN LIGASE</scope>
    <scope>FUNCTION (MICROBIAL FUNCTION)</scope>
    <scope>CATALYTIC ACTIVITY</scope>
    <scope>AUTOUBIQUITINATION</scope>
    <scope>DOMAIN RING-TYPE ZINC FINGER</scope>
    <scope>SUBCELLULAR LOCATION</scope>
    <scope>INTERACTION WITH JAPANESE ENCEPHALITIS VIRUS (MICROBIAL INFECTION)</scope>
</reference>
<reference key="9">
    <citation type="journal article" date="2017" name="Mol. Immunol.">
        <title>TRIM52: A nuclear TRIM protein that positively regulates the nuclear factor-kappa B signaling pathway.</title>
        <authorList>
            <person name="Fan W."/>
            <person name="Liu T."/>
            <person name="Li X."/>
            <person name="Zhou Y."/>
            <person name="Wu M."/>
            <person name="Cui X."/>
            <person name="Chen H."/>
            <person name="Qian P."/>
        </authorList>
    </citation>
    <scope>FUNCTION</scope>
    <scope>SUBCELLULAR LOCATION</scope>
    <scope>INDUCTION</scope>
    <scope>DOMAIN RING-TYPE ZINC FINGER</scope>
    <scope>UBIQUITINATION</scope>
</reference>
<reference key="10">
    <citation type="journal article" date="2019" name="Sci. Rep.">
        <title>A repetitive acidic region contributes to the extremely rapid degradation of the cell-context essential protein TRIM52.</title>
        <authorList>
            <person name="Hacker K."/>
            <person name="Benke S."/>
            <person name="Agerer B."/>
            <person name="Scinicariello S."/>
            <person name="Budroni V."/>
            <person name="Versteeg G.A."/>
        </authorList>
    </citation>
    <scope>INDUCTION</scope>
    <scope>PROTEASOMAL DEGRADATION</scope>
    <scope>REGION</scope>
</reference>
<sequence length="297" mass="34653">MAGYATTPSPMQTLQEEAVCAICLDYFKDPVSISCGHNFCRGCVTQLWSKEDEEDQNEEEDEWEEEEDEEAVGAMDGWDGSIREVLYRGNADEELFQDQDDDELWLGDSGITNWDNVDYMWDEEEEEEEEDQDYYLGGLRPDLRIDVYREEEILEAYDEDEDEELYPDIHPPPSLPLPGQFTCPQCRKSFTRRSFRPNLQLANMVQIIRQMCPTPYRGNRSNDQGMCFKHQEALKLFCEVDKEAICVVCRESRSHKQHSVLPLEEVVQEYQEIKLETTLVGILQIEQESIHSKAYNQ</sequence>
<dbReference type="EC" id="2.3.2.27" evidence="4"/>
<dbReference type="EMBL" id="JX896146">
    <property type="protein sequence ID" value="AGA17664.1"/>
    <property type="molecule type" value="mRNA"/>
</dbReference>
<dbReference type="EMBL" id="AK054802">
    <property type="protein sequence ID" value="BAB70809.1"/>
    <property type="molecule type" value="mRNA"/>
</dbReference>
<dbReference type="EMBL" id="AB209243">
    <property type="protein sequence ID" value="BAD92480.1"/>
    <property type="status" value="ALT_INIT"/>
    <property type="molecule type" value="mRNA"/>
</dbReference>
<dbReference type="EMBL" id="AC008443">
    <property type="status" value="NOT_ANNOTATED_CDS"/>
    <property type="molecule type" value="Genomic_DNA"/>
</dbReference>
<dbReference type="EMBL" id="CH471165">
    <property type="protein sequence ID" value="EAW53704.1"/>
    <property type="molecule type" value="Genomic_DNA"/>
</dbReference>
<dbReference type="EMBL" id="BC007372">
    <property type="protein sequence ID" value="AAH07372.1"/>
    <property type="molecule type" value="mRNA"/>
</dbReference>
<dbReference type="CCDS" id="CCDS4467.1">
    <molecule id="Q96A61-1"/>
</dbReference>
<dbReference type="RefSeq" id="NP_116154.1">
    <molecule id="Q96A61-1"/>
    <property type="nucleotide sequence ID" value="NM_032765.4"/>
</dbReference>
<dbReference type="SMR" id="Q96A61"/>
<dbReference type="BioGRID" id="124301">
    <property type="interactions" value="132"/>
</dbReference>
<dbReference type="FunCoup" id="Q96A61">
    <property type="interactions" value="1033"/>
</dbReference>
<dbReference type="IntAct" id="Q96A61">
    <property type="interactions" value="132"/>
</dbReference>
<dbReference type="STRING" id="9606.ENSP00000483005"/>
<dbReference type="iPTMnet" id="Q96A61"/>
<dbReference type="PhosphoSitePlus" id="Q96A61"/>
<dbReference type="BioMuta" id="TRIM52"/>
<dbReference type="DMDM" id="47606198"/>
<dbReference type="MassIVE" id="Q96A61"/>
<dbReference type="PaxDb" id="9606-ENSP00000483005"/>
<dbReference type="PeptideAtlas" id="Q96A61"/>
<dbReference type="ProteomicsDB" id="75922"/>
<dbReference type="Antibodypedia" id="29763">
    <property type="antibodies" value="35 antibodies from 12 providers"/>
</dbReference>
<dbReference type="DNASU" id="84851"/>
<dbReference type="Ensembl" id="ENST00000611618.1">
    <molecule id="Q96A61-1"/>
    <property type="protein sequence ID" value="ENSP00000483005.1"/>
    <property type="gene ID" value="ENSG00000183718.6"/>
</dbReference>
<dbReference type="GeneID" id="84851"/>
<dbReference type="KEGG" id="hsa:84851"/>
<dbReference type="UCSC" id="uc003mnp.4">
    <molecule id="Q96A61-1"/>
    <property type="organism name" value="human"/>
</dbReference>
<dbReference type="AGR" id="HGNC:19024"/>
<dbReference type="CTD" id="84851"/>
<dbReference type="DisGeNET" id="84851"/>
<dbReference type="GeneCards" id="TRIM52"/>
<dbReference type="HGNC" id="HGNC:19024">
    <property type="gene designation" value="TRIM52"/>
</dbReference>
<dbReference type="HPA" id="ENSG00000183718">
    <property type="expression patterns" value="Low tissue specificity"/>
</dbReference>
<dbReference type="MIM" id="619265">
    <property type="type" value="gene"/>
</dbReference>
<dbReference type="neXtProt" id="NX_Q96A61"/>
<dbReference type="OpenTargets" id="ENSG00000183718"/>
<dbReference type="PharmGKB" id="PA134943216"/>
<dbReference type="VEuPathDB" id="HostDB:ENSG00000183718"/>
<dbReference type="eggNOG" id="KOG2177">
    <property type="taxonomic scope" value="Eukaryota"/>
</dbReference>
<dbReference type="GeneTree" id="ENSGT00940000154294"/>
<dbReference type="HOGENOM" id="CLU_013137_6_2_1"/>
<dbReference type="InParanoid" id="Q96A61"/>
<dbReference type="OMA" id="IHSKAYN"/>
<dbReference type="OrthoDB" id="654191at2759"/>
<dbReference type="PAN-GO" id="Q96A61">
    <property type="GO annotations" value="5 GO annotations based on evolutionary models"/>
</dbReference>
<dbReference type="PhylomeDB" id="Q96A61"/>
<dbReference type="PathwayCommons" id="Q96A61"/>
<dbReference type="SignaLink" id="Q96A61"/>
<dbReference type="SIGNOR" id="Q96A61"/>
<dbReference type="UniPathway" id="UPA00143"/>
<dbReference type="BioGRID-ORCS" id="84851">
    <property type="hits" value="28 hits in 1186 CRISPR screens"/>
</dbReference>
<dbReference type="ChiTaRS" id="TRIM52">
    <property type="organism name" value="human"/>
</dbReference>
<dbReference type="GenomeRNAi" id="84851"/>
<dbReference type="Pharos" id="Q96A61">
    <property type="development level" value="Tdark"/>
</dbReference>
<dbReference type="PRO" id="PR:Q96A61"/>
<dbReference type="Proteomes" id="UP000005640">
    <property type="component" value="Chromosome 5"/>
</dbReference>
<dbReference type="RNAct" id="Q96A61">
    <property type="molecule type" value="protein"/>
</dbReference>
<dbReference type="Bgee" id="ENSG00000183718">
    <property type="expression patterns" value="Expressed in buccal mucosa cell and 184 other cell types or tissues"/>
</dbReference>
<dbReference type="GO" id="GO:0005737">
    <property type="term" value="C:cytoplasm"/>
    <property type="evidence" value="ECO:0000314"/>
    <property type="project" value="UniProtKB"/>
</dbReference>
<dbReference type="GO" id="GO:0005829">
    <property type="term" value="C:cytosol"/>
    <property type="evidence" value="ECO:0000314"/>
    <property type="project" value="UniProtKB"/>
</dbReference>
<dbReference type="GO" id="GO:0005634">
    <property type="term" value="C:nucleus"/>
    <property type="evidence" value="ECO:0000314"/>
    <property type="project" value="UniProtKB"/>
</dbReference>
<dbReference type="GO" id="GO:0003713">
    <property type="term" value="F:transcription coactivator activity"/>
    <property type="evidence" value="ECO:0000314"/>
    <property type="project" value="ARUK-UCL"/>
</dbReference>
<dbReference type="GO" id="GO:0061630">
    <property type="term" value="F:ubiquitin protein ligase activity"/>
    <property type="evidence" value="ECO:0000314"/>
    <property type="project" value="UniProtKB"/>
</dbReference>
<dbReference type="GO" id="GO:0008270">
    <property type="term" value="F:zinc ion binding"/>
    <property type="evidence" value="ECO:0007669"/>
    <property type="project" value="UniProtKB-KW"/>
</dbReference>
<dbReference type="GO" id="GO:0051607">
    <property type="term" value="P:defense response to virus"/>
    <property type="evidence" value="ECO:0000314"/>
    <property type="project" value="UniProtKB"/>
</dbReference>
<dbReference type="GO" id="GO:0045087">
    <property type="term" value="P:innate immune response"/>
    <property type="evidence" value="ECO:0000318"/>
    <property type="project" value="GO_Central"/>
</dbReference>
<dbReference type="GO" id="GO:0043123">
    <property type="term" value="P:positive regulation of canonical NF-kappaB signal transduction"/>
    <property type="evidence" value="ECO:0000314"/>
    <property type="project" value="UniProtKB"/>
</dbReference>
<dbReference type="GO" id="GO:0051092">
    <property type="term" value="P:positive regulation of NF-kappaB transcription factor activity"/>
    <property type="evidence" value="ECO:0000314"/>
    <property type="project" value="UniProtKB"/>
</dbReference>
<dbReference type="GO" id="GO:0051865">
    <property type="term" value="P:protein autoubiquitination"/>
    <property type="evidence" value="ECO:0000314"/>
    <property type="project" value="UniProtKB"/>
</dbReference>
<dbReference type="GO" id="GO:0016567">
    <property type="term" value="P:protein ubiquitination"/>
    <property type="evidence" value="ECO:0000314"/>
    <property type="project" value="UniProtKB"/>
</dbReference>
<dbReference type="CDD" id="cd19762">
    <property type="entry name" value="Bbox2_TRIM7-like"/>
    <property type="match status" value="1"/>
</dbReference>
<dbReference type="FunFam" id="3.30.40.10:FF:000216">
    <property type="entry name" value="E3 ubiquitin-protein ligase TRIM41 isoform X1"/>
    <property type="match status" value="1"/>
</dbReference>
<dbReference type="FunFam" id="3.30.160.60:FF:000486">
    <property type="entry name" value="E3 ubiquitin-protein ligase TRIM41 isoform X2"/>
    <property type="match status" value="1"/>
</dbReference>
<dbReference type="Gene3D" id="3.30.160.60">
    <property type="entry name" value="Classic Zinc Finger"/>
    <property type="match status" value="1"/>
</dbReference>
<dbReference type="Gene3D" id="3.30.40.10">
    <property type="entry name" value="Zinc/RING finger domain, C3HC4 (zinc finger)"/>
    <property type="match status" value="1"/>
</dbReference>
<dbReference type="InterPro" id="IPR050143">
    <property type="entry name" value="TRIM/RBCC"/>
</dbReference>
<dbReference type="InterPro" id="IPR000315">
    <property type="entry name" value="Znf_B-box"/>
</dbReference>
<dbReference type="InterPro" id="IPR001841">
    <property type="entry name" value="Znf_RING"/>
</dbReference>
<dbReference type="InterPro" id="IPR013083">
    <property type="entry name" value="Znf_RING/FYVE/PHD"/>
</dbReference>
<dbReference type="InterPro" id="IPR017907">
    <property type="entry name" value="Znf_RING_CS"/>
</dbReference>
<dbReference type="PANTHER" id="PTHR24103">
    <property type="entry name" value="E3 UBIQUITIN-PROTEIN LIGASE TRIM"/>
    <property type="match status" value="1"/>
</dbReference>
<dbReference type="Pfam" id="PF00643">
    <property type="entry name" value="zf-B_box"/>
    <property type="match status" value="1"/>
</dbReference>
<dbReference type="Pfam" id="PF15227">
    <property type="entry name" value="zf-C3HC4_4"/>
    <property type="match status" value="1"/>
</dbReference>
<dbReference type="SMART" id="SM00336">
    <property type="entry name" value="BBOX"/>
    <property type="match status" value="1"/>
</dbReference>
<dbReference type="SMART" id="SM00184">
    <property type="entry name" value="RING"/>
    <property type="match status" value="1"/>
</dbReference>
<dbReference type="SUPFAM" id="SSF57845">
    <property type="entry name" value="B-box zinc-binding domain"/>
    <property type="match status" value="1"/>
</dbReference>
<dbReference type="SUPFAM" id="SSF57850">
    <property type="entry name" value="RING/U-box"/>
    <property type="match status" value="1"/>
</dbReference>
<dbReference type="PROSITE" id="PS50119">
    <property type="entry name" value="ZF_BBOX"/>
    <property type="match status" value="1"/>
</dbReference>
<dbReference type="PROSITE" id="PS00518">
    <property type="entry name" value="ZF_RING_1"/>
    <property type="match status" value="1"/>
</dbReference>
<dbReference type="PROSITE" id="PS50089">
    <property type="entry name" value="ZF_RING_2"/>
    <property type="match status" value="1"/>
</dbReference>
<evidence type="ECO:0000255" key="1">
    <source>
        <dbReference type="PROSITE-ProRule" id="PRU00024"/>
    </source>
</evidence>
<evidence type="ECO:0000255" key="2">
    <source>
        <dbReference type="PROSITE-ProRule" id="PRU00175"/>
    </source>
</evidence>
<evidence type="ECO:0000269" key="3">
    <source>
    </source>
</evidence>
<evidence type="ECO:0000269" key="4">
    <source>
    </source>
</evidence>
<evidence type="ECO:0000269" key="5">
    <source>
    </source>
</evidence>
<evidence type="ECO:0000269" key="6">
    <source>
    </source>
</evidence>
<evidence type="ECO:0000305" key="7"/>
<evidence type="ECO:0000305" key="8">
    <source>
    </source>
</evidence>
<gene>
    <name type="primary">TRIM52</name>
    <name type="synonym">RNF102</name>
</gene>
<protein>
    <recommendedName>
        <fullName>E3 ubiquitin-protein ligase TRIM52</fullName>
        <ecNumber evidence="4">2.3.2.27</ecNumber>
    </recommendedName>
    <alternativeName>
        <fullName>RING finger protein 102</fullName>
    </alternativeName>
    <alternativeName>
        <fullName>Tripartite motif-containing protein 52</fullName>
    </alternativeName>
</protein>
<organism>
    <name type="scientific">Homo sapiens</name>
    <name type="common">Human</name>
    <dbReference type="NCBI Taxonomy" id="9606"/>
    <lineage>
        <taxon>Eukaryota</taxon>
        <taxon>Metazoa</taxon>
        <taxon>Chordata</taxon>
        <taxon>Craniata</taxon>
        <taxon>Vertebrata</taxon>
        <taxon>Euteleostomi</taxon>
        <taxon>Mammalia</taxon>
        <taxon>Eutheria</taxon>
        <taxon>Euarchontoglires</taxon>
        <taxon>Primates</taxon>
        <taxon>Haplorrhini</taxon>
        <taxon>Catarrhini</taxon>
        <taxon>Hominidae</taxon>
        <taxon>Homo</taxon>
    </lineage>
</organism>